<protein>
    <recommendedName>
        <fullName evidence="2">Sulfate adenylyltransferase subunit 1</fullName>
        <ecNumber evidence="2">2.7.7.4</ecNumber>
    </recommendedName>
    <alternativeName>
        <fullName evidence="2">ATP-sulfurylase large subunit</fullName>
    </alternativeName>
    <alternativeName>
        <fullName evidence="2">Sulfate adenylate transferase</fullName>
        <shortName evidence="2">SAT</shortName>
    </alternativeName>
</protein>
<accession>A8A3N0</accession>
<comment type="function">
    <text evidence="2">With CysD forms the ATP sulfurylase (ATPS) that catalyzes the adenylation of sulfate producing adenosine 5'-phosphosulfate (APS) and diphosphate, the first enzymatic step in sulfur assimilation pathway. APS synthesis involves the formation of a high-energy phosphoric-sulfuric acid anhydride bond driven by GTP hydrolysis by CysN coupled to ATP hydrolysis by CysD.</text>
</comment>
<comment type="catalytic activity">
    <reaction evidence="2">
        <text>sulfate + ATP + H(+) = adenosine 5'-phosphosulfate + diphosphate</text>
        <dbReference type="Rhea" id="RHEA:18133"/>
        <dbReference type="ChEBI" id="CHEBI:15378"/>
        <dbReference type="ChEBI" id="CHEBI:16189"/>
        <dbReference type="ChEBI" id="CHEBI:30616"/>
        <dbReference type="ChEBI" id="CHEBI:33019"/>
        <dbReference type="ChEBI" id="CHEBI:58243"/>
        <dbReference type="EC" id="2.7.7.4"/>
    </reaction>
</comment>
<comment type="pathway">
    <text evidence="2">Sulfur metabolism; hydrogen sulfide biosynthesis; sulfite from sulfate: step 1/3.</text>
</comment>
<comment type="subunit">
    <text evidence="2">Heterodimer composed of CysD, the smaller subunit, and CysN.</text>
</comment>
<comment type="similarity">
    <text evidence="2">Belongs to the TRAFAC class translation factor GTPase superfamily. Classic translation factor GTPase family. CysN/NodQ subfamily.</text>
</comment>
<organism>
    <name type="scientific">Escherichia coli O9:H4 (strain HS)</name>
    <dbReference type="NCBI Taxonomy" id="331112"/>
    <lineage>
        <taxon>Bacteria</taxon>
        <taxon>Pseudomonadati</taxon>
        <taxon>Pseudomonadota</taxon>
        <taxon>Gammaproteobacteria</taxon>
        <taxon>Enterobacterales</taxon>
        <taxon>Enterobacteriaceae</taxon>
        <taxon>Escherichia</taxon>
    </lineage>
</organism>
<feature type="chain" id="PRO_1000057428" description="Sulfate adenylyltransferase subunit 1">
    <location>
        <begin position="1"/>
        <end position="475"/>
    </location>
</feature>
<feature type="domain" description="tr-type G">
    <location>
        <begin position="25"/>
        <end position="239"/>
    </location>
</feature>
<feature type="region of interest" description="G1" evidence="1">
    <location>
        <begin position="34"/>
        <end position="41"/>
    </location>
</feature>
<feature type="region of interest" description="G2" evidence="1">
    <location>
        <begin position="92"/>
        <end position="96"/>
    </location>
</feature>
<feature type="region of interest" description="G3" evidence="1">
    <location>
        <begin position="113"/>
        <end position="116"/>
    </location>
</feature>
<feature type="region of interest" description="G4" evidence="1">
    <location>
        <begin position="168"/>
        <end position="171"/>
    </location>
</feature>
<feature type="region of interest" description="G5" evidence="1">
    <location>
        <begin position="206"/>
        <end position="208"/>
    </location>
</feature>
<feature type="binding site" evidence="2">
    <location>
        <begin position="34"/>
        <end position="41"/>
    </location>
    <ligand>
        <name>GTP</name>
        <dbReference type="ChEBI" id="CHEBI:37565"/>
    </ligand>
</feature>
<feature type="binding site" evidence="2">
    <location>
        <begin position="113"/>
        <end position="117"/>
    </location>
    <ligand>
        <name>GTP</name>
        <dbReference type="ChEBI" id="CHEBI:37565"/>
    </ligand>
</feature>
<feature type="binding site" evidence="2">
    <location>
        <begin position="168"/>
        <end position="171"/>
    </location>
    <ligand>
        <name>GTP</name>
        <dbReference type="ChEBI" id="CHEBI:37565"/>
    </ligand>
</feature>
<dbReference type="EC" id="2.7.7.4" evidence="2"/>
<dbReference type="EMBL" id="CP000802">
    <property type="protein sequence ID" value="ABV07134.1"/>
    <property type="molecule type" value="Genomic_DNA"/>
</dbReference>
<dbReference type="RefSeq" id="WP_001090362.1">
    <property type="nucleotide sequence ID" value="NC_009800.1"/>
</dbReference>
<dbReference type="SMR" id="A8A3N0"/>
<dbReference type="KEGG" id="ecx:EcHS_A2889"/>
<dbReference type="HOGENOM" id="CLU_007265_5_2_6"/>
<dbReference type="UniPathway" id="UPA00140">
    <property type="reaction ID" value="UER00204"/>
</dbReference>
<dbReference type="GO" id="GO:0005524">
    <property type="term" value="F:ATP binding"/>
    <property type="evidence" value="ECO:0007669"/>
    <property type="project" value="UniProtKB-KW"/>
</dbReference>
<dbReference type="GO" id="GO:0005525">
    <property type="term" value="F:GTP binding"/>
    <property type="evidence" value="ECO:0007669"/>
    <property type="project" value="UniProtKB-UniRule"/>
</dbReference>
<dbReference type="GO" id="GO:0003924">
    <property type="term" value="F:GTPase activity"/>
    <property type="evidence" value="ECO:0007669"/>
    <property type="project" value="InterPro"/>
</dbReference>
<dbReference type="GO" id="GO:0004781">
    <property type="term" value="F:sulfate adenylyltransferase (ATP) activity"/>
    <property type="evidence" value="ECO:0007669"/>
    <property type="project" value="UniProtKB-UniRule"/>
</dbReference>
<dbReference type="GO" id="GO:0070814">
    <property type="term" value="P:hydrogen sulfide biosynthetic process"/>
    <property type="evidence" value="ECO:0007669"/>
    <property type="project" value="UniProtKB-UniRule"/>
</dbReference>
<dbReference type="GO" id="GO:0000103">
    <property type="term" value="P:sulfate assimilation"/>
    <property type="evidence" value="ECO:0007669"/>
    <property type="project" value="UniProtKB-UniRule"/>
</dbReference>
<dbReference type="CDD" id="cd04166">
    <property type="entry name" value="CysN_ATPS"/>
    <property type="match status" value="1"/>
</dbReference>
<dbReference type="CDD" id="cd03695">
    <property type="entry name" value="CysN_NodQ_II"/>
    <property type="match status" value="1"/>
</dbReference>
<dbReference type="CDD" id="cd04095">
    <property type="entry name" value="CysN_NoDQ_III"/>
    <property type="match status" value="1"/>
</dbReference>
<dbReference type="FunFam" id="2.40.30.10:FF:000027">
    <property type="entry name" value="Sulfate adenylyltransferase subunit 1"/>
    <property type="match status" value="1"/>
</dbReference>
<dbReference type="FunFam" id="2.40.30.10:FF:000031">
    <property type="entry name" value="Sulfate adenylyltransferase subunit 1"/>
    <property type="match status" value="1"/>
</dbReference>
<dbReference type="FunFam" id="3.40.50.300:FF:000119">
    <property type="entry name" value="Sulfate adenylyltransferase subunit 1"/>
    <property type="match status" value="1"/>
</dbReference>
<dbReference type="Gene3D" id="3.40.50.300">
    <property type="entry name" value="P-loop containing nucleotide triphosphate hydrolases"/>
    <property type="match status" value="1"/>
</dbReference>
<dbReference type="Gene3D" id="2.40.30.10">
    <property type="entry name" value="Translation factors"/>
    <property type="match status" value="2"/>
</dbReference>
<dbReference type="HAMAP" id="MF_00062">
    <property type="entry name" value="Sulf_adenylyltr_sub1"/>
    <property type="match status" value="1"/>
</dbReference>
<dbReference type="InterPro" id="IPR041757">
    <property type="entry name" value="CysN_GTP-bd"/>
</dbReference>
<dbReference type="InterPro" id="IPR044138">
    <property type="entry name" value="CysN_II"/>
</dbReference>
<dbReference type="InterPro" id="IPR044139">
    <property type="entry name" value="CysN_NoDQ_III"/>
</dbReference>
<dbReference type="InterPro" id="IPR031157">
    <property type="entry name" value="G_TR_CS"/>
</dbReference>
<dbReference type="InterPro" id="IPR054696">
    <property type="entry name" value="GTP-eEF1A_C"/>
</dbReference>
<dbReference type="InterPro" id="IPR027417">
    <property type="entry name" value="P-loop_NTPase"/>
</dbReference>
<dbReference type="InterPro" id="IPR005225">
    <property type="entry name" value="Small_GTP-bd"/>
</dbReference>
<dbReference type="InterPro" id="IPR011779">
    <property type="entry name" value="SO4_adenylTrfase_lsu"/>
</dbReference>
<dbReference type="InterPro" id="IPR000795">
    <property type="entry name" value="T_Tr_GTP-bd_dom"/>
</dbReference>
<dbReference type="InterPro" id="IPR050100">
    <property type="entry name" value="TRAFAC_GTPase_members"/>
</dbReference>
<dbReference type="InterPro" id="IPR009000">
    <property type="entry name" value="Transl_B-barrel_sf"/>
</dbReference>
<dbReference type="InterPro" id="IPR009001">
    <property type="entry name" value="Transl_elong_EF1A/Init_IF2_C"/>
</dbReference>
<dbReference type="NCBIfam" id="TIGR02034">
    <property type="entry name" value="CysN"/>
    <property type="match status" value="1"/>
</dbReference>
<dbReference type="NCBIfam" id="NF003478">
    <property type="entry name" value="PRK05124.1"/>
    <property type="match status" value="1"/>
</dbReference>
<dbReference type="NCBIfam" id="TIGR00231">
    <property type="entry name" value="small_GTP"/>
    <property type="match status" value="1"/>
</dbReference>
<dbReference type="PANTHER" id="PTHR23115">
    <property type="entry name" value="TRANSLATION FACTOR"/>
    <property type="match status" value="1"/>
</dbReference>
<dbReference type="Pfam" id="PF22594">
    <property type="entry name" value="GTP-eEF1A_C"/>
    <property type="match status" value="1"/>
</dbReference>
<dbReference type="Pfam" id="PF00009">
    <property type="entry name" value="GTP_EFTU"/>
    <property type="match status" value="1"/>
</dbReference>
<dbReference type="PRINTS" id="PR00315">
    <property type="entry name" value="ELONGATNFCT"/>
</dbReference>
<dbReference type="SUPFAM" id="SSF50465">
    <property type="entry name" value="EF-Tu/eEF-1alpha/eIF2-gamma C-terminal domain"/>
    <property type="match status" value="1"/>
</dbReference>
<dbReference type="SUPFAM" id="SSF52540">
    <property type="entry name" value="P-loop containing nucleoside triphosphate hydrolases"/>
    <property type="match status" value="1"/>
</dbReference>
<dbReference type="SUPFAM" id="SSF50447">
    <property type="entry name" value="Translation proteins"/>
    <property type="match status" value="1"/>
</dbReference>
<dbReference type="PROSITE" id="PS00301">
    <property type="entry name" value="G_TR_1"/>
    <property type="match status" value="1"/>
</dbReference>
<dbReference type="PROSITE" id="PS51722">
    <property type="entry name" value="G_TR_2"/>
    <property type="match status" value="1"/>
</dbReference>
<name>CYSN_ECOHS</name>
<evidence type="ECO:0000250" key="1"/>
<evidence type="ECO:0000255" key="2">
    <source>
        <dbReference type="HAMAP-Rule" id="MF_00062"/>
    </source>
</evidence>
<sequence length="475" mass="52587">MNTALAQQIANEGGVEAWMIAQQHKSLLRFLTCGSVDDGKSTLIGRLLHDTRQIYEDQLSSLHNDSKRHGTQGEKLDLALLVDGLQAEREQGITIDVAYRYFSTEKRKFIIADTPGHEQYTRNMATGASTCELAILLIDARKGVLDQTRRHSFISTLLGIKHLVVAINKMDLVDYSEETFTRIREDYLTFAGQLPGNLDIRFVPLSALEGDNVASQSESMPWYSGPTLLEVLETVEIQRVVDAQPMRFPVQYVNRPNLDFRGYAGTLASGRVEVGQRVKVLPSGVESNVARIVTFDGDREEAFAGEAITLVLTDEIDISRGDLLLAADEALPAVQSASVDVVWMAEQPLSPGQSYDIKIAGKKTRARVDGIRYQVDINNLTQREVENLPLNGIGLVDLTFDEPLVLDRYQQNPVTGGLIFIDRLSNVTVGAGMVHEPVSQATAAPSEFSVFELELNALVRRHFPHWGARDLLGDK</sequence>
<keyword id="KW-0067">ATP-binding</keyword>
<keyword id="KW-0342">GTP-binding</keyword>
<keyword id="KW-0547">Nucleotide-binding</keyword>
<keyword id="KW-0548">Nucleotidyltransferase</keyword>
<keyword id="KW-0808">Transferase</keyword>
<proteinExistence type="inferred from homology"/>
<gene>
    <name evidence="2" type="primary">cysN</name>
    <name type="ordered locus">EcHS_A2889</name>
</gene>
<reference key="1">
    <citation type="journal article" date="2008" name="J. Bacteriol.">
        <title>The pangenome structure of Escherichia coli: comparative genomic analysis of E. coli commensal and pathogenic isolates.</title>
        <authorList>
            <person name="Rasko D.A."/>
            <person name="Rosovitz M.J."/>
            <person name="Myers G.S.A."/>
            <person name="Mongodin E.F."/>
            <person name="Fricke W.F."/>
            <person name="Gajer P."/>
            <person name="Crabtree J."/>
            <person name="Sebaihia M."/>
            <person name="Thomson N.R."/>
            <person name="Chaudhuri R."/>
            <person name="Henderson I.R."/>
            <person name="Sperandio V."/>
            <person name="Ravel J."/>
        </authorList>
    </citation>
    <scope>NUCLEOTIDE SEQUENCE [LARGE SCALE GENOMIC DNA]</scope>
    <source>
        <strain>HS</strain>
    </source>
</reference>